<sequence>MDQTHKKIHWRLGLCKCKNISLVETRESYRSLHPTNQPYRSAIQCSWADDNFVTPEEEYEPSLPSSESPTDSCHADHESPDSPKYQQPAPGERPECEIYKDLCSDPQTVDWAAPPLKIRDGRHQELFLLYAEITLFSHWASIKLVEWAKPLELIYVIVQTWEPKLTMKAKAANANFYVTFSNRHGFPYHAVIRRTTTRIPNQMSLEFKMLMRSK</sequence>
<organism>
    <name type="scientific">Arabidopsis thaliana</name>
    <name type="common">Mouse-ear cress</name>
    <dbReference type="NCBI Taxonomy" id="3702"/>
    <lineage>
        <taxon>Eukaryota</taxon>
        <taxon>Viridiplantae</taxon>
        <taxon>Streptophyta</taxon>
        <taxon>Embryophyta</taxon>
        <taxon>Tracheophyta</taxon>
        <taxon>Spermatophyta</taxon>
        <taxon>Magnoliopsida</taxon>
        <taxon>eudicotyledons</taxon>
        <taxon>Gunneridae</taxon>
        <taxon>Pentapetalae</taxon>
        <taxon>rosids</taxon>
        <taxon>malvids</taxon>
        <taxon>Brassicales</taxon>
        <taxon>Brassicaceae</taxon>
        <taxon>Camelineae</taxon>
        <taxon>Arabidopsis</taxon>
    </lineage>
</organism>
<name>Y1195_ARATH</name>
<feature type="chain" id="PRO_0000363138" description="UPF0725 protein At1g19565">
    <location>
        <begin position="1"/>
        <end position="214"/>
    </location>
</feature>
<feature type="region of interest" description="Disordered" evidence="1">
    <location>
        <begin position="56"/>
        <end position="92"/>
    </location>
</feature>
<evidence type="ECO:0000256" key="1">
    <source>
        <dbReference type="SAM" id="MobiDB-lite"/>
    </source>
</evidence>
<evidence type="ECO:0000305" key="2"/>
<keyword id="KW-1185">Reference proteome</keyword>
<proteinExistence type="inferred from homology"/>
<gene>
    <name type="ordered locus">At1g19565</name>
    <name type="ORF">F18O14.33</name>
</gene>
<comment type="similarity">
    <text evidence="2">Belongs to the UPF0725 (EMB2204) family.</text>
</comment>
<comment type="sequence caution" evidence="2">
    <conflict type="erroneous gene model prediction">
        <sequence resource="EMBL-CDS" id="AAF79440"/>
    </conflict>
    <text>The predicted gene At1g19570 has been split into 2 genes: At1g19565 and At1g19570.</text>
</comment>
<dbReference type="EMBL" id="AC025808">
    <property type="protein sequence ID" value="AAF79440.1"/>
    <property type="status" value="ALT_SEQ"/>
    <property type="molecule type" value="Genomic_DNA"/>
</dbReference>
<dbReference type="EMBL" id="CP002684">
    <property type="protein sequence ID" value="ANM58430.1"/>
    <property type="molecule type" value="Genomic_DNA"/>
</dbReference>
<dbReference type="PIR" id="D86328">
    <property type="entry name" value="D86328"/>
</dbReference>
<dbReference type="RefSeq" id="NP_001320864.1">
    <property type="nucleotide sequence ID" value="NM_001332398.1"/>
</dbReference>
<dbReference type="SMR" id="P0C8P5"/>
<dbReference type="EnsemblPlants" id="AT1G19565.1">
    <property type="protein sequence ID" value="AT1G19565.1"/>
    <property type="gene ID" value="AT1G19565"/>
</dbReference>
<dbReference type="GeneID" id="28717251"/>
<dbReference type="Gramene" id="AT1G19565.1">
    <property type="protein sequence ID" value="AT1G19565.1"/>
    <property type="gene ID" value="AT1G19565"/>
</dbReference>
<dbReference type="KEGG" id="ath:AT1G19565"/>
<dbReference type="Araport" id="AT1G19565"/>
<dbReference type="TAIR" id="AT1G19565"/>
<dbReference type="InParanoid" id="P0C8P5"/>
<dbReference type="PRO" id="PR:P0C8P5"/>
<dbReference type="Proteomes" id="UP000006548">
    <property type="component" value="Chromosome 1"/>
</dbReference>
<dbReference type="ExpressionAtlas" id="P0C8P5">
    <property type="expression patterns" value="baseline and differential"/>
</dbReference>
<dbReference type="InterPro" id="IPR006462">
    <property type="entry name" value="MS5"/>
</dbReference>
<dbReference type="Pfam" id="PF04776">
    <property type="entry name" value="protein_MS5"/>
    <property type="match status" value="1"/>
</dbReference>
<protein>
    <recommendedName>
        <fullName>UPF0725 protein At1g19565</fullName>
    </recommendedName>
</protein>
<reference key="1">
    <citation type="journal article" date="2000" name="Nature">
        <title>Sequence and analysis of chromosome 1 of the plant Arabidopsis thaliana.</title>
        <authorList>
            <person name="Theologis A."/>
            <person name="Ecker J.R."/>
            <person name="Palm C.J."/>
            <person name="Federspiel N.A."/>
            <person name="Kaul S."/>
            <person name="White O."/>
            <person name="Alonso J."/>
            <person name="Altafi H."/>
            <person name="Araujo R."/>
            <person name="Bowman C.L."/>
            <person name="Brooks S.Y."/>
            <person name="Buehler E."/>
            <person name="Chan A."/>
            <person name="Chao Q."/>
            <person name="Chen H."/>
            <person name="Cheuk R.F."/>
            <person name="Chin C.W."/>
            <person name="Chung M.K."/>
            <person name="Conn L."/>
            <person name="Conway A.B."/>
            <person name="Conway A.R."/>
            <person name="Creasy T.H."/>
            <person name="Dewar K."/>
            <person name="Dunn P."/>
            <person name="Etgu P."/>
            <person name="Feldblyum T.V."/>
            <person name="Feng J.-D."/>
            <person name="Fong B."/>
            <person name="Fujii C.Y."/>
            <person name="Gill J.E."/>
            <person name="Goldsmith A.D."/>
            <person name="Haas B."/>
            <person name="Hansen N.F."/>
            <person name="Hughes B."/>
            <person name="Huizar L."/>
            <person name="Hunter J.L."/>
            <person name="Jenkins J."/>
            <person name="Johnson-Hopson C."/>
            <person name="Khan S."/>
            <person name="Khaykin E."/>
            <person name="Kim C.J."/>
            <person name="Koo H.L."/>
            <person name="Kremenetskaia I."/>
            <person name="Kurtz D.B."/>
            <person name="Kwan A."/>
            <person name="Lam B."/>
            <person name="Langin-Hooper S."/>
            <person name="Lee A."/>
            <person name="Lee J.M."/>
            <person name="Lenz C.A."/>
            <person name="Li J.H."/>
            <person name="Li Y.-P."/>
            <person name="Lin X."/>
            <person name="Liu S.X."/>
            <person name="Liu Z.A."/>
            <person name="Luros J.S."/>
            <person name="Maiti R."/>
            <person name="Marziali A."/>
            <person name="Militscher J."/>
            <person name="Miranda M."/>
            <person name="Nguyen M."/>
            <person name="Nierman W.C."/>
            <person name="Osborne B.I."/>
            <person name="Pai G."/>
            <person name="Peterson J."/>
            <person name="Pham P.K."/>
            <person name="Rizzo M."/>
            <person name="Rooney T."/>
            <person name="Rowley D."/>
            <person name="Sakano H."/>
            <person name="Salzberg S.L."/>
            <person name="Schwartz J.R."/>
            <person name="Shinn P."/>
            <person name="Southwick A.M."/>
            <person name="Sun H."/>
            <person name="Tallon L.J."/>
            <person name="Tambunga G."/>
            <person name="Toriumi M.J."/>
            <person name="Town C.D."/>
            <person name="Utterback T."/>
            <person name="Van Aken S."/>
            <person name="Vaysberg M."/>
            <person name="Vysotskaia V.S."/>
            <person name="Walker M."/>
            <person name="Wu D."/>
            <person name="Yu G."/>
            <person name="Fraser C.M."/>
            <person name="Venter J.C."/>
            <person name="Davis R.W."/>
        </authorList>
    </citation>
    <scope>NUCLEOTIDE SEQUENCE [LARGE SCALE GENOMIC DNA]</scope>
    <source>
        <strain>cv. Columbia</strain>
    </source>
</reference>
<reference key="2">
    <citation type="journal article" date="2017" name="Plant J.">
        <title>Araport11: a complete reannotation of the Arabidopsis thaliana reference genome.</title>
        <authorList>
            <person name="Cheng C.Y."/>
            <person name="Krishnakumar V."/>
            <person name="Chan A.P."/>
            <person name="Thibaud-Nissen F."/>
            <person name="Schobel S."/>
            <person name="Town C.D."/>
        </authorList>
    </citation>
    <scope>GENOME REANNOTATION</scope>
    <source>
        <strain>cv. Columbia</strain>
    </source>
</reference>
<accession>P0C8P5</accession>
<accession>Q9LN37</accession>